<reference key="1">
    <citation type="journal article" date="1998" name="Nature">
        <title>The complete genome of the hyperthermophilic bacterium Aquifex aeolicus.</title>
        <authorList>
            <person name="Deckert G."/>
            <person name="Warren P.V."/>
            <person name="Gaasterland T."/>
            <person name="Young W.G."/>
            <person name="Lenox A.L."/>
            <person name="Graham D.E."/>
            <person name="Overbeek R."/>
            <person name="Snead M.A."/>
            <person name="Keller M."/>
            <person name="Aujay M."/>
            <person name="Huber R."/>
            <person name="Feldman R.A."/>
            <person name="Short J.M."/>
            <person name="Olsen G.J."/>
            <person name="Swanson R.V."/>
        </authorList>
    </citation>
    <scope>NUCLEOTIDE SEQUENCE [LARGE SCALE GENOMIC DNA]</scope>
    <source>
        <strain>VF5</strain>
    </source>
</reference>
<evidence type="ECO:0000255" key="1"/>
<evidence type="ECO:0000255" key="2">
    <source>
        <dbReference type="HAMAP-Rule" id="MF_01895"/>
    </source>
</evidence>
<proteinExistence type="inferred from homology"/>
<feature type="chain" id="PRO_0000166395" description="Ribonuclease R">
    <location>
        <begin position="1"/>
        <end position="705"/>
    </location>
</feature>
<feature type="domain" description="RNB" evidence="1">
    <location>
        <begin position="240"/>
        <end position="567"/>
    </location>
</feature>
<feature type="domain" description="S1 motif" evidence="2">
    <location>
        <begin position="615"/>
        <end position="696"/>
    </location>
</feature>
<comment type="function">
    <text evidence="2">3'-5' exoribonuclease that releases 5'-nucleoside monophosphates and is involved in maturation of structured RNAs.</text>
</comment>
<comment type="catalytic activity">
    <reaction evidence="2">
        <text>Exonucleolytic cleavage in the 3'- to 5'-direction to yield nucleoside 5'-phosphates.</text>
        <dbReference type="EC" id="3.1.13.1"/>
    </reaction>
</comment>
<comment type="subcellular location">
    <subcellularLocation>
        <location evidence="2">Cytoplasm</location>
    </subcellularLocation>
</comment>
<comment type="similarity">
    <text evidence="2">Belongs to the RNR ribonuclease family. RNase R subfamily.</text>
</comment>
<dbReference type="EC" id="3.1.13.1" evidence="2"/>
<dbReference type="EMBL" id="AE000657">
    <property type="protein sequence ID" value="AAC07792.1"/>
    <property type="molecule type" value="Genomic_DNA"/>
</dbReference>
<dbReference type="PIR" id="F70475">
    <property type="entry name" value="F70475"/>
</dbReference>
<dbReference type="RefSeq" id="NP_214403.1">
    <property type="nucleotide sequence ID" value="NC_000918.1"/>
</dbReference>
<dbReference type="RefSeq" id="WP_010881339.1">
    <property type="nucleotide sequence ID" value="NC_000918.1"/>
</dbReference>
<dbReference type="SMR" id="O67834"/>
<dbReference type="FunCoup" id="O67834">
    <property type="interactions" value="406"/>
</dbReference>
<dbReference type="STRING" id="224324.aq_2046"/>
<dbReference type="EnsemblBacteria" id="AAC07792">
    <property type="protein sequence ID" value="AAC07792"/>
    <property type="gene ID" value="aq_2046"/>
</dbReference>
<dbReference type="KEGG" id="aae:aq_2046"/>
<dbReference type="PATRIC" id="fig|224324.8.peg.1580"/>
<dbReference type="eggNOG" id="COG0557">
    <property type="taxonomic scope" value="Bacteria"/>
</dbReference>
<dbReference type="HOGENOM" id="CLU_002333_7_0_0"/>
<dbReference type="InParanoid" id="O67834"/>
<dbReference type="OrthoDB" id="9764149at2"/>
<dbReference type="Proteomes" id="UP000000798">
    <property type="component" value="Chromosome"/>
</dbReference>
<dbReference type="GO" id="GO:0005829">
    <property type="term" value="C:cytosol"/>
    <property type="evidence" value="ECO:0000318"/>
    <property type="project" value="GO_Central"/>
</dbReference>
<dbReference type="GO" id="GO:0008859">
    <property type="term" value="F:exoribonuclease II activity"/>
    <property type="evidence" value="ECO:0007669"/>
    <property type="project" value="UniProtKB-UniRule"/>
</dbReference>
<dbReference type="GO" id="GO:0003723">
    <property type="term" value="F:RNA binding"/>
    <property type="evidence" value="ECO:0007669"/>
    <property type="project" value="UniProtKB-UniRule"/>
</dbReference>
<dbReference type="GO" id="GO:0006402">
    <property type="term" value="P:mRNA catabolic process"/>
    <property type="evidence" value="ECO:0000318"/>
    <property type="project" value="GO_Central"/>
</dbReference>
<dbReference type="CDD" id="cd00164">
    <property type="entry name" value="S1_like"/>
    <property type="match status" value="1"/>
</dbReference>
<dbReference type="CDD" id="cd04471">
    <property type="entry name" value="S1_RNase_R"/>
    <property type="match status" value="1"/>
</dbReference>
<dbReference type="Gene3D" id="2.40.50.140">
    <property type="entry name" value="Nucleic acid-binding proteins"/>
    <property type="match status" value="2"/>
</dbReference>
<dbReference type="HAMAP" id="MF_01895">
    <property type="entry name" value="RNase_R"/>
    <property type="match status" value="1"/>
</dbReference>
<dbReference type="InterPro" id="IPR011129">
    <property type="entry name" value="CSD"/>
</dbReference>
<dbReference type="InterPro" id="IPR040476">
    <property type="entry name" value="CSD2"/>
</dbReference>
<dbReference type="InterPro" id="IPR012340">
    <property type="entry name" value="NA-bd_OB-fold"/>
</dbReference>
<dbReference type="InterPro" id="IPR013223">
    <property type="entry name" value="RNase_B_OB_dom"/>
</dbReference>
<dbReference type="InterPro" id="IPR001900">
    <property type="entry name" value="RNase_II/R"/>
</dbReference>
<dbReference type="InterPro" id="IPR022966">
    <property type="entry name" value="RNase_II/R_CS"/>
</dbReference>
<dbReference type="InterPro" id="IPR004476">
    <property type="entry name" value="RNase_II/RNase_R"/>
</dbReference>
<dbReference type="InterPro" id="IPR011805">
    <property type="entry name" value="RNase_R"/>
</dbReference>
<dbReference type="InterPro" id="IPR050180">
    <property type="entry name" value="RNR_Ribonuclease"/>
</dbReference>
<dbReference type="InterPro" id="IPR003029">
    <property type="entry name" value="S1_domain"/>
</dbReference>
<dbReference type="InterPro" id="IPR036390">
    <property type="entry name" value="WH_DNA-bd_sf"/>
</dbReference>
<dbReference type="NCBIfam" id="TIGR00358">
    <property type="entry name" value="3_prime_RNase"/>
    <property type="match status" value="1"/>
</dbReference>
<dbReference type="NCBIfam" id="TIGR02063">
    <property type="entry name" value="RNase_R"/>
    <property type="match status" value="1"/>
</dbReference>
<dbReference type="PANTHER" id="PTHR23355:SF9">
    <property type="entry name" value="DIS3-LIKE EXONUCLEASE 2"/>
    <property type="match status" value="1"/>
</dbReference>
<dbReference type="PANTHER" id="PTHR23355">
    <property type="entry name" value="RIBONUCLEASE"/>
    <property type="match status" value="1"/>
</dbReference>
<dbReference type="Pfam" id="PF17876">
    <property type="entry name" value="CSD2"/>
    <property type="match status" value="1"/>
</dbReference>
<dbReference type="Pfam" id="PF08206">
    <property type="entry name" value="OB_RNB"/>
    <property type="match status" value="1"/>
</dbReference>
<dbReference type="Pfam" id="PF00773">
    <property type="entry name" value="RNB"/>
    <property type="match status" value="1"/>
</dbReference>
<dbReference type="Pfam" id="PF00575">
    <property type="entry name" value="S1"/>
    <property type="match status" value="1"/>
</dbReference>
<dbReference type="SMART" id="SM00357">
    <property type="entry name" value="CSP"/>
    <property type="match status" value="1"/>
</dbReference>
<dbReference type="SMART" id="SM00955">
    <property type="entry name" value="RNB"/>
    <property type="match status" value="1"/>
</dbReference>
<dbReference type="SMART" id="SM00316">
    <property type="entry name" value="S1"/>
    <property type="match status" value="2"/>
</dbReference>
<dbReference type="SUPFAM" id="SSF50249">
    <property type="entry name" value="Nucleic acid-binding proteins"/>
    <property type="match status" value="4"/>
</dbReference>
<dbReference type="SUPFAM" id="SSF46785">
    <property type="entry name" value="Winged helix' DNA-binding domain"/>
    <property type="match status" value="1"/>
</dbReference>
<dbReference type="PROSITE" id="PS01175">
    <property type="entry name" value="RIBONUCLEASE_II"/>
    <property type="match status" value="1"/>
</dbReference>
<dbReference type="PROSITE" id="PS50126">
    <property type="entry name" value="S1"/>
    <property type="match status" value="1"/>
</dbReference>
<protein>
    <recommendedName>
        <fullName evidence="2">Ribonuclease R</fullName>
        <shortName evidence="2">RNase R</shortName>
        <ecNumber evidence="2">3.1.13.1</ecNumber>
    </recommendedName>
    <alternativeName>
        <fullName>VacB protein homolog</fullName>
    </alternativeName>
</protein>
<keyword id="KW-0963">Cytoplasm</keyword>
<keyword id="KW-0269">Exonuclease</keyword>
<keyword id="KW-0378">Hydrolase</keyword>
<keyword id="KW-0540">Nuclease</keyword>
<keyword id="KW-1185">Reference proteome</keyword>
<keyword id="KW-0694">RNA-binding</keyword>
<sequence>MDKEKLEKEVIKLLSKKKKPLHFLQIAKALGLGKKERKTLKKVMRKLKKEGKVKVVKGKYEYTGEEVVTGTVIAYPGGFGFLEVEGGKDIYIPPFEMVKVFHGDVVKAKVTEFKGKKEVRIIKVLKRAKKDIVAKVVFEDEQCYVVPLDENAHHRILLSKKDCQKLKEGEVVVLKITQFPTKKSPARGKVIEVLGNPKEKFIAIDVIIRKYNLPTSYPEKVIKEVEAIPEEIPEEEIKRRRDLREQLCFTIDPEKAGDFDDAVAIELTPEGYYKLYVHIADVSYYVREGTETDKEAYKRGFTYYFPDRALHMLPEKLSAKLCSLRPNEDKLAFTVEMVFDESGNLKAYDIYESVIRSKARLTYNEALALIVGDPALEKKFPNLVEPLRMMETLYRILSRKRWEMGSIDFDLPEAEVIVDEYGEPTAIYPYERHVAHRIIEHFMISANETVALHLEHAGYPCLYRVHEPPDEEKVENLLEILEGLGYKVKRPHEYTPKFFQKIIEDFEGRPEENLVRFLTLRAMARAKYSPHNVGHFGLALEHYAHFTSPIRRYPDIIVHRLLKKALRGEEIDYEKTLAYLEEAGNHLSKQERIADEAEMEAIDYLKARYMKGRIGEEFIGIITGVVAFGFFVELEENLVEGLVKINTLTDDEYVFDEPAHRLVGVRTGKVFRLGDHVKVRCIAVDEERARVEFELIEKLEKHETL</sequence>
<gene>
    <name evidence="2" type="primary">rnr</name>
    <name type="synonym">vacB</name>
    <name type="ordered locus">aq_2046</name>
</gene>
<name>RNR_AQUAE</name>
<organism>
    <name type="scientific">Aquifex aeolicus (strain VF5)</name>
    <dbReference type="NCBI Taxonomy" id="224324"/>
    <lineage>
        <taxon>Bacteria</taxon>
        <taxon>Pseudomonadati</taxon>
        <taxon>Aquificota</taxon>
        <taxon>Aquificia</taxon>
        <taxon>Aquificales</taxon>
        <taxon>Aquificaceae</taxon>
        <taxon>Aquifex</taxon>
    </lineage>
</organism>
<accession>O67834</accession>